<gene>
    <name type="primary">MT-ND4L</name>
    <name type="synonym">MTND4L</name>
    <name type="synonym">NADH4L</name>
    <name type="synonym">ND4L</name>
</gene>
<reference key="1">
    <citation type="book" date="2006" name="Occasional Papers of the Texas Tech University Museum">
        <title>Mouse lemurs of Northwestern Madagascar with a description of a new species at Lokobe Special Reserve.</title>
        <editorList>
            <person name="Baker R.J."/>
        </editorList>
        <authorList>
            <person name="Andriantompohavana R."/>
            <person name="Zaonarivelo J.R."/>
            <person name="Engberg S.E."/>
            <person name="Randriamampionona R."/>
            <person name="McGuire S.M."/>
            <person name="Shore G.D."/>
            <person name="Rakotonomenjanahary R."/>
            <person name="Brenneman R.A."/>
            <person name="Louis E.E. Jr."/>
        </authorList>
    </citation>
    <scope>NUCLEOTIDE SEQUENCE [GENOMIC DNA]</scope>
    <source>
        <strain>Isolate LOKO4.26</strain>
        <strain>Isolate LOKO4.37</strain>
        <strain>Isolate LOKO4.38</strain>
        <strain>Isolate PBZT130</strain>
    </source>
</reference>
<accession>Q00GF0</accession>
<accession>Q00GF8</accession>
<comment type="function">
    <text evidence="1">Core subunit of the mitochondrial membrane respiratory chain NADH dehydrogenase (Complex I) which catalyzes electron transfer from NADH through the respiratory chain, using ubiquinone as an electron acceptor. Part of the enzyme membrane arm which is embedded in the lipid bilayer and involved in proton translocation.</text>
</comment>
<comment type="catalytic activity">
    <reaction evidence="1">
        <text>a ubiquinone + NADH + 5 H(+)(in) = a ubiquinol + NAD(+) + 4 H(+)(out)</text>
        <dbReference type="Rhea" id="RHEA:29091"/>
        <dbReference type="Rhea" id="RHEA-COMP:9565"/>
        <dbReference type="Rhea" id="RHEA-COMP:9566"/>
        <dbReference type="ChEBI" id="CHEBI:15378"/>
        <dbReference type="ChEBI" id="CHEBI:16389"/>
        <dbReference type="ChEBI" id="CHEBI:17976"/>
        <dbReference type="ChEBI" id="CHEBI:57540"/>
        <dbReference type="ChEBI" id="CHEBI:57945"/>
        <dbReference type="EC" id="7.1.1.2"/>
    </reaction>
    <physiologicalReaction direction="left-to-right" evidence="1">
        <dbReference type="Rhea" id="RHEA:29092"/>
    </physiologicalReaction>
</comment>
<comment type="subunit">
    <text evidence="2">Core subunit of respiratory chain NADH dehydrogenase (Complex I) which is composed of 45 different subunits.</text>
</comment>
<comment type="subcellular location">
    <subcellularLocation>
        <location evidence="2">Mitochondrion inner membrane</location>
        <topology evidence="3">Multi-pass membrane protein</topology>
    </subcellularLocation>
</comment>
<comment type="similarity">
    <text evidence="4">Belongs to the complex I subunit 4L family.</text>
</comment>
<dbReference type="EC" id="7.1.1.2"/>
<dbReference type="EMBL" id="DQ535017">
    <property type="protein sequence ID" value="ABG02113.1"/>
    <property type="molecule type" value="Genomic_DNA"/>
</dbReference>
<dbReference type="EMBL" id="DQ535018">
    <property type="protein sequence ID" value="ABG02117.1"/>
    <property type="molecule type" value="Genomic_DNA"/>
</dbReference>
<dbReference type="EMBL" id="DQ535019">
    <property type="protein sequence ID" value="ABG02121.1"/>
    <property type="molecule type" value="Genomic_DNA"/>
</dbReference>
<dbReference type="EMBL" id="DQ535020">
    <property type="protein sequence ID" value="ABG02125.1"/>
    <property type="molecule type" value="Genomic_DNA"/>
</dbReference>
<dbReference type="SMR" id="Q00GF0"/>
<dbReference type="GO" id="GO:0005743">
    <property type="term" value="C:mitochondrial inner membrane"/>
    <property type="evidence" value="ECO:0000250"/>
    <property type="project" value="UniProtKB"/>
</dbReference>
<dbReference type="GO" id="GO:0045271">
    <property type="term" value="C:respiratory chain complex I"/>
    <property type="evidence" value="ECO:0000250"/>
    <property type="project" value="UniProtKB"/>
</dbReference>
<dbReference type="GO" id="GO:0008137">
    <property type="term" value="F:NADH dehydrogenase (ubiquinone) activity"/>
    <property type="evidence" value="ECO:0000250"/>
    <property type="project" value="UniProtKB"/>
</dbReference>
<dbReference type="GO" id="GO:0042773">
    <property type="term" value="P:ATP synthesis coupled electron transport"/>
    <property type="evidence" value="ECO:0007669"/>
    <property type="project" value="InterPro"/>
</dbReference>
<dbReference type="FunFam" id="1.10.287.3510:FF:000002">
    <property type="entry name" value="NADH-ubiquinone oxidoreductase chain 4L"/>
    <property type="match status" value="1"/>
</dbReference>
<dbReference type="Gene3D" id="1.10.287.3510">
    <property type="match status" value="1"/>
</dbReference>
<dbReference type="InterPro" id="IPR001133">
    <property type="entry name" value="NADH_UbQ_OxRdtase_chain4L/K"/>
</dbReference>
<dbReference type="InterPro" id="IPR039428">
    <property type="entry name" value="NUOK/Mnh_C1-like"/>
</dbReference>
<dbReference type="PANTHER" id="PTHR11434:SF0">
    <property type="entry name" value="NADH-UBIQUINONE OXIDOREDUCTASE CHAIN 4L"/>
    <property type="match status" value="1"/>
</dbReference>
<dbReference type="PANTHER" id="PTHR11434">
    <property type="entry name" value="NADH-UBIQUINONE OXIDOREDUCTASE SUBUNIT ND4L"/>
    <property type="match status" value="1"/>
</dbReference>
<dbReference type="Pfam" id="PF00420">
    <property type="entry name" value="Oxidored_q2"/>
    <property type="match status" value="1"/>
</dbReference>
<geneLocation type="mitochondrion"/>
<feature type="chain" id="PRO_0000275058" description="NADH-ubiquinone oxidoreductase chain 4L">
    <location>
        <begin position="1"/>
        <end position="98"/>
    </location>
</feature>
<feature type="transmembrane region" description="Helical" evidence="3">
    <location>
        <begin position="2"/>
        <end position="22"/>
    </location>
</feature>
<feature type="transmembrane region" description="Helical" evidence="3">
    <location>
        <begin position="29"/>
        <end position="49"/>
    </location>
</feature>
<feature type="transmembrane region" description="Helical" evidence="3">
    <location>
        <begin position="61"/>
        <end position="81"/>
    </location>
</feature>
<feature type="sequence variant" description="In strain: Isolate LOKO4.37.">
    <original>P</original>
    <variation>R</variation>
    <location>
        <position position="60"/>
    </location>
</feature>
<proteinExistence type="inferred from homology"/>
<sequence length="98" mass="10708">MPSISININLAFAAALLGMLMFRSHMMSSLLCLEGMMLSMFTLSTLIILNLQLTMSFTMPILLLVFAACEAAIGLALLVTVSNNYGLDYIQNLNLLQC</sequence>
<evidence type="ECO:0000250" key="1">
    <source>
        <dbReference type="UniProtKB" id="P03901"/>
    </source>
</evidence>
<evidence type="ECO:0000250" key="2">
    <source>
        <dbReference type="UniProtKB" id="P03902"/>
    </source>
</evidence>
<evidence type="ECO:0000255" key="3"/>
<evidence type="ECO:0000305" key="4"/>
<protein>
    <recommendedName>
        <fullName>NADH-ubiquinone oxidoreductase chain 4L</fullName>
        <ecNumber>7.1.1.2</ecNumber>
    </recommendedName>
    <alternativeName>
        <fullName>NADH dehydrogenase subunit 4L</fullName>
    </alternativeName>
</protein>
<organism>
    <name type="scientific">Microcebus mamiratra</name>
    <name type="common">Claire's mouse lemur</name>
    <dbReference type="NCBI Taxonomy" id="415757"/>
    <lineage>
        <taxon>Eukaryota</taxon>
        <taxon>Metazoa</taxon>
        <taxon>Chordata</taxon>
        <taxon>Craniata</taxon>
        <taxon>Vertebrata</taxon>
        <taxon>Euteleostomi</taxon>
        <taxon>Mammalia</taxon>
        <taxon>Eutheria</taxon>
        <taxon>Euarchontoglires</taxon>
        <taxon>Primates</taxon>
        <taxon>Strepsirrhini</taxon>
        <taxon>Lemuriformes</taxon>
        <taxon>Cheirogaleidae</taxon>
        <taxon>Microcebus</taxon>
    </lineage>
</organism>
<name>NU4LM_MICMM</name>
<keyword id="KW-0249">Electron transport</keyword>
<keyword id="KW-0472">Membrane</keyword>
<keyword id="KW-0496">Mitochondrion</keyword>
<keyword id="KW-0999">Mitochondrion inner membrane</keyword>
<keyword id="KW-0520">NAD</keyword>
<keyword id="KW-0679">Respiratory chain</keyword>
<keyword id="KW-1278">Translocase</keyword>
<keyword id="KW-0812">Transmembrane</keyword>
<keyword id="KW-1133">Transmembrane helix</keyword>
<keyword id="KW-0813">Transport</keyword>
<keyword id="KW-0830">Ubiquinone</keyword>